<organism>
    <name type="scientific">Macrococcus caseolyticus (strain JCSC5402)</name>
    <name type="common">Macrococcoides caseolyticum</name>
    <dbReference type="NCBI Taxonomy" id="458233"/>
    <lineage>
        <taxon>Bacteria</taxon>
        <taxon>Bacillati</taxon>
        <taxon>Bacillota</taxon>
        <taxon>Bacilli</taxon>
        <taxon>Bacillales</taxon>
        <taxon>Staphylococcaceae</taxon>
        <taxon>Macrococcoides</taxon>
    </lineage>
</organism>
<reference key="1">
    <citation type="journal article" date="2009" name="J. Bacteriol.">
        <title>Complete genome sequence of Macrococcus caseolyticus strain JCSCS5402, reflecting the ancestral genome of the human-pathogenic staphylococci.</title>
        <authorList>
            <person name="Baba T."/>
            <person name="Kuwahara-Arai K."/>
            <person name="Uchiyama I."/>
            <person name="Takeuchi F."/>
            <person name="Ito T."/>
            <person name="Hiramatsu K."/>
        </authorList>
    </citation>
    <scope>NUCLEOTIDE SEQUENCE [LARGE SCALE GENOMIC DNA]</scope>
    <source>
        <strain>JCSC5402</strain>
    </source>
</reference>
<comment type="function">
    <text evidence="1">The glycine cleavage system catalyzes the degradation of glycine. The P protein binds the alpha-amino group of glycine through its pyridoxal phosphate cofactor; CO(2) is released and the remaining methylamine moiety is then transferred to the lipoamide cofactor of the H protein.</text>
</comment>
<comment type="catalytic activity">
    <reaction evidence="1">
        <text>N(6)-[(R)-lipoyl]-L-lysyl-[glycine-cleavage complex H protein] + glycine + H(+) = N(6)-[(R)-S(8)-aminomethyldihydrolipoyl]-L-lysyl-[glycine-cleavage complex H protein] + CO2</text>
        <dbReference type="Rhea" id="RHEA:24304"/>
        <dbReference type="Rhea" id="RHEA-COMP:10494"/>
        <dbReference type="Rhea" id="RHEA-COMP:10495"/>
        <dbReference type="ChEBI" id="CHEBI:15378"/>
        <dbReference type="ChEBI" id="CHEBI:16526"/>
        <dbReference type="ChEBI" id="CHEBI:57305"/>
        <dbReference type="ChEBI" id="CHEBI:83099"/>
        <dbReference type="ChEBI" id="CHEBI:83143"/>
        <dbReference type="EC" id="1.4.4.2"/>
    </reaction>
</comment>
<comment type="subunit">
    <text evidence="1">The glycine cleavage system is composed of four proteins: P, T, L and H. In this organism, the P 'protein' is a heterodimer of two subunits.</text>
</comment>
<comment type="similarity">
    <text evidence="1">Belongs to the GcvP family. N-terminal subunit subfamily.</text>
</comment>
<evidence type="ECO:0000255" key="1">
    <source>
        <dbReference type="HAMAP-Rule" id="MF_00712"/>
    </source>
</evidence>
<proteinExistence type="inferred from homology"/>
<accession>B9E6R9</accession>
<feature type="chain" id="PRO_1000147989" description="Probable glycine dehydrogenase (decarboxylating) subunit 1">
    <location>
        <begin position="1"/>
        <end position="447"/>
    </location>
</feature>
<keyword id="KW-0560">Oxidoreductase</keyword>
<keyword id="KW-1185">Reference proteome</keyword>
<protein>
    <recommendedName>
        <fullName evidence="1">Probable glycine dehydrogenase (decarboxylating) subunit 1</fullName>
        <ecNumber evidence="1">1.4.4.2</ecNumber>
    </recommendedName>
    <alternativeName>
        <fullName evidence="1">Glycine cleavage system P-protein subunit 1</fullName>
    </alternativeName>
    <alternativeName>
        <fullName evidence="1">Glycine decarboxylase subunit 1</fullName>
    </alternativeName>
    <alternativeName>
        <fullName evidence="1">Glycine dehydrogenase (aminomethyl-transferring) subunit 1</fullName>
    </alternativeName>
</protein>
<gene>
    <name evidence="1" type="primary">gcvPA</name>
    <name type="ordered locus">MCCL_1180</name>
</gene>
<name>GCSPA_MACCJ</name>
<sequence>MSHRYIPLTETDKKEMMETIGINSIDELFQDIPEKVRFQGDLNIKPRKSETPLLRELQALANKNVTSDTHVSFLGAGVYDHYIPTVVDHVISRSEFYTAYTPYQPEISQGELQAIFEFQTMIAELTGMDCANSSMYDGGTSFAEAAMLACGHTRNKKIIVSKAVNDQSRAVLHTYAKGQHLEVVEIDVKDTVTDLDALKAAIDEDTACVMVQYPNFFGSIEDLETIKSFTEGTKALFVVSSNPMSLGLLTPPGEFGADLVVGDAQVFGIPAQLGGPHCGYFAATKKLMRKMPGRLVGQTQDDEGNRGFVLTLQAREQHIRRDKATSNICSNQALNALAASVAMSALGKNGVYEMANQNLQKANYMKSRMVEEGFEVLEGTTFNEFVVKFNHPVKEINEKLLDEGFIGGYDLGQVEEQYHNHMLIAVTELRTKEEIDTFIAKVGVFNA</sequence>
<dbReference type="EC" id="1.4.4.2" evidence="1"/>
<dbReference type="EMBL" id="AP009484">
    <property type="protein sequence ID" value="BAH17887.1"/>
    <property type="molecule type" value="Genomic_DNA"/>
</dbReference>
<dbReference type="RefSeq" id="WP_012657085.1">
    <property type="nucleotide sequence ID" value="NC_011999.1"/>
</dbReference>
<dbReference type="SMR" id="B9E6R9"/>
<dbReference type="STRING" id="458233.MCCL_1180"/>
<dbReference type="GeneID" id="61128934"/>
<dbReference type="KEGG" id="mcl:MCCL_1180"/>
<dbReference type="eggNOG" id="COG0403">
    <property type="taxonomic scope" value="Bacteria"/>
</dbReference>
<dbReference type="HOGENOM" id="CLU_004620_0_2_9"/>
<dbReference type="OrthoDB" id="9771867at2"/>
<dbReference type="Proteomes" id="UP000001383">
    <property type="component" value="Chromosome"/>
</dbReference>
<dbReference type="GO" id="GO:0004375">
    <property type="term" value="F:glycine dehydrogenase (decarboxylating) activity"/>
    <property type="evidence" value="ECO:0007669"/>
    <property type="project" value="UniProtKB-EC"/>
</dbReference>
<dbReference type="GO" id="GO:0019464">
    <property type="term" value="P:glycine decarboxylation via glycine cleavage system"/>
    <property type="evidence" value="ECO:0007669"/>
    <property type="project" value="UniProtKB-UniRule"/>
</dbReference>
<dbReference type="GO" id="GO:0009116">
    <property type="term" value="P:nucleoside metabolic process"/>
    <property type="evidence" value="ECO:0007669"/>
    <property type="project" value="InterPro"/>
</dbReference>
<dbReference type="CDD" id="cd00613">
    <property type="entry name" value="GDC-P"/>
    <property type="match status" value="1"/>
</dbReference>
<dbReference type="Gene3D" id="3.90.1150.10">
    <property type="entry name" value="Aspartate Aminotransferase, domain 1"/>
    <property type="match status" value="1"/>
</dbReference>
<dbReference type="Gene3D" id="3.40.640.10">
    <property type="entry name" value="Type I PLP-dependent aspartate aminotransferase-like (Major domain)"/>
    <property type="match status" value="1"/>
</dbReference>
<dbReference type="HAMAP" id="MF_00712">
    <property type="entry name" value="GcvPA"/>
    <property type="match status" value="1"/>
</dbReference>
<dbReference type="InterPro" id="IPR023010">
    <property type="entry name" value="GcvPA"/>
</dbReference>
<dbReference type="InterPro" id="IPR049315">
    <property type="entry name" value="GDC-P_N"/>
</dbReference>
<dbReference type="InterPro" id="IPR020581">
    <property type="entry name" value="GDC_P"/>
</dbReference>
<dbReference type="InterPro" id="IPR015424">
    <property type="entry name" value="PyrdxlP-dep_Trfase"/>
</dbReference>
<dbReference type="InterPro" id="IPR015421">
    <property type="entry name" value="PyrdxlP-dep_Trfase_major"/>
</dbReference>
<dbReference type="InterPro" id="IPR015422">
    <property type="entry name" value="PyrdxlP-dep_Trfase_small"/>
</dbReference>
<dbReference type="NCBIfam" id="NF001696">
    <property type="entry name" value="PRK00451.1"/>
    <property type="match status" value="1"/>
</dbReference>
<dbReference type="PANTHER" id="PTHR42806">
    <property type="entry name" value="GLYCINE CLEAVAGE SYSTEM P-PROTEIN"/>
    <property type="match status" value="1"/>
</dbReference>
<dbReference type="PANTHER" id="PTHR42806:SF1">
    <property type="entry name" value="GLYCINE DEHYDROGENASE (DECARBOXYLATING)"/>
    <property type="match status" value="1"/>
</dbReference>
<dbReference type="Pfam" id="PF02347">
    <property type="entry name" value="GDC-P"/>
    <property type="match status" value="1"/>
</dbReference>
<dbReference type="PIRSF" id="PIRSF006815">
    <property type="entry name" value="GcvPA"/>
    <property type="match status" value="1"/>
</dbReference>
<dbReference type="SUPFAM" id="SSF53383">
    <property type="entry name" value="PLP-dependent transferases"/>
    <property type="match status" value="1"/>
</dbReference>